<organism>
    <name type="scientific">Bacillus anthracis (strain CDC 684 / NRRL 3495)</name>
    <dbReference type="NCBI Taxonomy" id="568206"/>
    <lineage>
        <taxon>Bacteria</taxon>
        <taxon>Bacillati</taxon>
        <taxon>Bacillota</taxon>
        <taxon>Bacilli</taxon>
        <taxon>Bacillales</taxon>
        <taxon>Bacillaceae</taxon>
        <taxon>Bacillus</taxon>
        <taxon>Bacillus cereus group</taxon>
    </lineage>
</organism>
<protein>
    <recommendedName>
        <fullName evidence="1">Large ribosomal subunit protein bL21</fullName>
    </recommendedName>
    <alternativeName>
        <fullName evidence="2">50S ribosomal protein L21</fullName>
    </alternativeName>
</protein>
<name>RL21_BACAC</name>
<reference key="1">
    <citation type="submission" date="2008-10" db="EMBL/GenBank/DDBJ databases">
        <title>Genome sequence of Bacillus anthracis str. CDC 684.</title>
        <authorList>
            <person name="Dodson R.J."/>
            <person name="Munk A.C."/>
            <person name="Brettin T."/>
            <person name="Bruce D."/>
            <person name="Detter C."/>
            <person name="Tapia R."/>
            <person name="Han C."/>
            <person name="Sutton G."/>
            <person name="Sims D."/>
        </authorList>
    </citation>
    <scope>NUCLEOTIDE SEQUENCE [LARGE SCALE GENOMIC DNA]</scope>
    <source>
        <strain>CDC 684 / NRRL 3495</strain>
    </source>
</reference>
<proteinExistence type="inferred from homology"/>
<gene>
    <name evidence="1" type="primary">rplU</name>
    <name type="ordered locus">BAMEG_4711</name>
</gene>
<accession>C3L6X6</accession>
<sequence>MYAIIETGGKQIKVEAGQAIYIEKLDVEAGETVTFDKVLFVGGENVKVGSPVVEGATVTAKVEKQGRAKKIIVFKYKAKKNNRKKQGHRQPYTKLVVEAINA</sequence>
<evidence type="ECO:0000255" key="1">
    <source>
        <dbReference type="HAMAP-Rule" id="MF_01363"/>
    </source>
</evidence>
<evidence type="ECO:0000305" key="2"/>
<comment type="function">
    <text evidence="1">This protein binds to 23S rRNA in the presence of protein L20.</text>
</comment>
<comment type="subunit">
    <text evidence="1">Part of the 50S ribosomal subunit. Contacts protein L20.</text>
</comment>
<comment type="similarity">
    <text evidence="1">Belongs to the bacterial ribosomal protein bL21 family.</text>
</comment>
<keyword id="KW-0687">Ribonucleoprotein</keyword>
<keyword id="KW-0689">Ribosomal protein</keyword>
<keyword id="KW-0694">RNA-binding</keyword>
<keyword id="KW-0699">rRNA-binding</keyword>
<feature type="chain" id="PRO_1000166700" description="Large ribosomal subunit protein bL21">
    <location>
        <begin position="1"/>
        <end position="102"/>
    </location>
</feature>
<dbReference type="EMBL" id="CP001215">
    <property type="protein sequence ID" value="ACP15535.1"/>
    <property type="molecule type" value="Genomic_DNA"/>
</dbReference>
<dbReference type="RefSeq" id="WP_000270907.1">
    <property type="nucleotide sequence ID" value="NC_012581.1"/>
</dbReference>
<dbReference type="SMR" id="C3L6X6"/>
<dbReference type="GeneID" id="93006656"/>
<dbReference type="KEGG" id="bah:BAMEG_4711"/>
<dbReference type="HOGENOM" id="CLU_061463_3_2_9"/>
<dbReference type="GO" id="GO:0005737">
    <property type="term" value="C:cytoplasm"/>
    <property type="evidence" value="ECO:0007669"/>
    <property type="project" value="UniProtKB-ARBA"/>
</dbReference>
<dbReference type="GO" id="GO:1990904">
    <property type="term" value="C:ribonucleoprotein complex"/>
    <property type="evidence" value="ECO:0007669"/>
    <property type="project" value="UniProtKB-KW"/>
</dbReference>
<dbReference type="GO" id="GO:0005840">
    <property type="term" value="C:ribosome"/>
    <property type="evidence" value="ECO:0007669"/>
    <property type="project" value="UniProtKB-KW"/>
</dbReference>
<dbReference type="GO" id="GO:0019843">
    <property type="term" value="F:rRNA binding"/>
    <property type="evidence" value="ECO:0007669"/>
    <property type="project" value="UniProtKB-UniRule"/>
</dbReference>
<dbReference type="GO" id="GO:0003735">
    <property type="term" value="F:structural constituent of ribosome"/>
    <property type="evidence" value="ECO:0007669"/>
    <property type="project" value="InterPro"/>
</dbReference>
<dbReference type="GO" id="GO:0006412">
    <property type="term" value="P:translation"/>
    <property type="evidence" value="ECO:0007669"/>
    <property type="project" value="UniProtKB-UniRule"/>
</dbReference>
<dbReference type="HAMAP" id="MF_01363">
    <property type="entry name" value="Ribosomal_bL21"/>
    <property type="match status" value="1"/>
</dbReference>
<dbReference type="InterPro" id="IPR028909">
    <property type="entry name" value="bL21-like"/>
</dbReference>
<dbReference type="InterPro" id="IPR036164">
    <property type="entry name" value="bL21-like_sf"/>
</dbReference>
<dbReference type="InterPro" id="IPR001787">
    <property type="entry name" value="Ribosomal_bL21"/>
</dbReference>
<dbReference type="InterPro" id="IPR018258">
    <property type="entry name" value="Ribosomal_bL21_CS"/>
</dbReference>
<dbReference type="NCBIfam" id="TIGR00061">
    <property type="entry name" value="L21"/>
    <property type="match status" value="1"/>
</dbReference>
<dbReference type="PANTHER" id="PTHR21349">
    <property type="entry name" value="50S RIBOSOMAL PROTEIN L21"/>
    <property type="match status" value="1"/>
</dbReference>
<dbReference type="PANTHER" id="PTHR21349:SF0">
    <property type="entry name" value="LARGE RIBOSOMAL SUBUNIT PROTEIN BL21M"/>
    <property type="match status" value="1"/>
</dbReference>
<dbReference type="Pfam" id="PF00829">
    <property type="entry name" value="Ribosomal_L21p"/>
    <property type="match status" value="1"/>
</dbReference>
<dbReference type="SUPFAM" id="SSF141091">
    <property type="entry name" value="L21p-like"/>
    <property type="match status" value="1"/>
</dbReference>
<dbReference type="PROSITE" id="PS01169">
    <property type="entry name" value="RIBOSOMAL_L21"/>
    <property type="match status" value="1"/>
</dbReference>